<sequence length="313" mass="33408">MSSREIRIATRQSALALWQAEYVKARLEQAHPDLTVTLLPMTSRGDKLLDAPLAKIGGKGLFVKELETALLEGAADIAVHSMKDVPMDFPEGLGLYTICEREDPRDAFVSNTYASLDQLPAGSVVGTSSLRRQAQLLARRPDLQIRFLRGNVNTRLAKLDAGEYDAIILAAAGLIRLGFESRIRSSISVDDSLPAGGQGAVGIECRTADADLHALLAPLHHADTALRVTAERALNKRLNGGCQVPIACYAIREGDQLWLRGLVGQPDGSQLLRAEGRAPLAQAEALGVQVADDLLAQGAEAILAAVYGEAGHP</sequence>
<protein>
    <recommendedName>
        <fullName evidence="1">Porphobilinogen deaminase</fullName>
        <shortName evidence="1">PBG</shortName>
        <ecNumber evidence="1">2.5.1.61</ecNumber>
    </recommendedName>
    <alternativeName>
        <fullName evidence="1">Hydroxymethylbilane synthase</fullName>
        <shortName evidence="1">HMBS</shortName>
    </alternativeName>
    <alternativeName>
        <fullName evidence="1">Pre-uroporphyrinogen synthase</fullName>
    </alternativeName>
</protein>
<dbReference type="EC" id="2.5.1.61" evidence="1"/>
<dbReference type="EMBL" id="CP000744">
    <property type="protein sequence ID" value="ABR80736.1"/>
    <property type="molecule type" value="Genomic_DNA"/>
</dbReference>
<dbReference type="RefSeq" id="WP_012077869.1">
    <property type="nucleotide sequence ID" value="NC_009656.1"/>
</dbReference>
<dbReference type="SMR" id="A6VE37"/>
<dbReference type="GeneID" id="77223794"/>
<dbReference type="KEGG" id="pap:PSPA7_6006"/>
<dbReference type="HOGENOM" id="CLU_019704_0_2_6"/>
<dbReference type="UniPathway" id="UPA00251">
    <property type="reaction ID" value="UER00319"/>
</dbReference>
<dbReference type="Proteomes" id="UP000001582">
    <property type="component" value="Chromosome"/>
</dbReference>
<dbReference type="GO" id="GO:0005737">
    <property type="term" value="C:cytoplasm"/>
    <property type="evidence" value="ECO:0007669"/>
    <property type="project" value="TreeGrafter"/>
</dbReference>
<dbReference type="GO" id="GO:0004418">
    <property type="term" value="F:hydroxymethylbilane synthase activity"/>
    <property type="evidence" value="ECO:0007669"/>
    <property type="project" value="UniProtKB-UniRule"/>
</dbReference>
<dbReference type="GO" id="GO:0006782">
    <property type="term" value="P:protoporphyrinogen IX biosynthetic process"/>
    <property type="evidence" value="ECO:0007669"/>
    <property type="project" value="UniProtKB-UniRule"/>
</dbReference>
<dbReference type="CDD" id="cd13646">
    <property type="entry name" value="PBP2_EcHMBS_like"/>
    <property type="match status" value="1"/>
</dbReference>
<dbReference type="FunFam" id="3.30.160.40:FF:000002">
    <property type="entry name" value="Porphobilinogen deaminase"/>
    <property type="match status" value="1"/>
</dbReference>
<dbReference type="FunFam" id="3.40.190.10:FF:000004">
    <property type="entry name" value="Porphobilinogen deaminase"/>
    <property type="match status" value="1"/>
</dbReference>
<dbReference type="FunFam" id="3.40.190.10:FF:000005">
    <property type="entry name" value="Porphobilinogen deaminase"/>
    <property type="match status" value="1"/>
</dbReference>
<dbReference type="Gene3D" id="3.40.190.10">
    <property type="entry name" value="Periplasmic binding protein-like II"/>
    <property type="match status" value="2"/>
</dbReference>
<dbReference type="Gene3D" id="3.30.160.40">
    <property type="entry name" value="Porphobilinogen deaminase, C-terminal domain"/>
    <property type="match status" value="1"/>
</dbReference>
<dbReference type="HAMAP" id="MF_00260">
    <property type="entry name" value="Porphobil_deam"/>
    <property type="match status" value="1"/>
</dbReference>
<dbReference type="InterPro" id="IPR000860">
    <property type="entry name" value="HemC"/>
</dbReference>
<dbReference type="InterPro" id="IPR022419">
    <property type="entry name" value="Porphobilin_deaminase_cofac_BS"/>
</dbReference>
<dbReference type="InterPro" id="IPR022417">
    <property type="entry name" value="Porphobilin_deaminase_N"/>
</dbReference>
<dbReference type="InterPro" id="IPR022418">
    <property type="entry name" value="Porphobilinogen_deaminase_C"/>
</dbReference>
<dbReference type="InterPro" id="IPR036803">
    <property type="entry name" value="Porphobilinogen_deaminase_C_sf"/>
</dbReference>
<dbReference type="NCBIfam" id="TIGR00212">
    <property type="entry name" value="hemC"/>
    <property type="match status" value="1"/>
</dbReference>
<dbReference type="PANTHER" id="PTHR11557">
    <property type="entry name" value="PORPHOBILINOGEN DEAMINASE"/>
    <property type="match status" value="1"/>
</dbReference>
<dbReference type="PANTHER" id="PTHR11557:SF0">
    <property type="entry name" value="PORPHOBILINOGEN DEAMINASE"/>
    <property type="match status" value="1"/>
</dbReference>
<dbReference type="Pfam" id="PF01379">
    <property type="entry name" value="Porphobil_deam"/>
    <property type="match status" value="1"/>
</dbReference>
<dbReference type="Pfam" id="PF03900">
    <property type="entry name" value="Porphobil_deamC"/>
    <property type="match status" value="1"/>
</dbReference>
<dbReference type="PIRSF" id="PIRSF001438">
    <property type="entry name" value="4pyrrol_synth_OHMeBilane_synth"/>
    <property type="match status" value="1"/>
</dbReference>
<dbReference type="PRINTS" id="PR00151">
    <property type="entry name" value="PORPHBDMNASE"/>
</dbReference>
<dbReference type="SUPFAM" id="SSF53850">
    <property type="entry name" value="Periplasmic binding protein-like II"/>
    <property type="match status" value="1"/>
</dbReference>
<dbReference type="SUPFAM" id="SSF54782">
    <property type="entry name" value="Porphobilinogen deaminase (hydroxymethylbilane synthase), C-terminal domain"/>
    <property type="match status" value="1"/>
</dbReference>
<dbReference type="PROSITE" id="PS00533">
    <property type="entry name" value="PORPHOBILINOGEN_DEAM"/>
    <property type="match status" value="1"/>
</dbReference>
<evidence type="ECO:0000255" key="1">
    <source>
        <dbReference type="HAMAP-Rule" id="MF_00260"/>
    </source>
</evidence>
<accession>A6VE37</accession>
<reference key="1">
    <citation type="submission" date="2007-06" db="EMBL/GenBank/DDBJ databases">
        <authorList>
            <person name="Dodson R.J."/>
            <person name="Harkins D."/>
            <person name="Paulsen I.T."/>
        </authorList>
    </citation>
    <scope>NUCLEOTIDE SEQUENCE [LARGE SCALE GENOMIC DNA]</scope>
    <source>
        <strain>DSM 24068 / PA7</strain>
    </source>
</reference>
<name>HEM3_PSEP7</name>
<gene>
    <name evidence="1" type="primary">hemC</name>
    <name type="ordered locus">PSPA7_6006</name>
</gene>
<feature type="chain" id="PRO_1000059104" description="Porphobilinogen deaminase">
    <location>
        <begin position="1"/>
        <end position="313"/>
    </location>
</feature>
<feature type="modified residue" description="S-(dipyrrolylmethanemethyl)cysteine" evidence="1">
    <location>
        <position position="242"/>
    </location>
</feature>
<comment type="function">
    <text evidence="1">Tetrapolymerization of the monopyrrole PBG into the hydroxymethylbilane pre-uroporphyrinogen in several discrete steps.</text>
</comment>
<comment type="catalytic activity">
    <reaction evidence="1">
        <text>4 porphobilinogen + H2O = hydroxymethylbilane + 4 NH4(+)</text>
        <dbReference type="Rhea" id="RHEA:13185"/>
        <dbReference type="ChEBI" id="CHEBI:15377"/>
        <dbReference type="ChEBI" id="CHEBI:28938"/>
        <dbReference type="ChEBI" id="CHEBI:57845"/>
        <dbReference type="ChEBI" id="CHEBI:58126"/>
        <dbReference type="EC" id="2.5.1.61"/>
    </reaction>
</comment>
<comment type="cofactor">
    <cofactor evidence="1">
        <name>dipyrromethane</name>
        <dbReference type="ChEBI" id="CHEBI:60342"/>
    </cofactor>
    <text evidence="1">Binds 1 dipyrromethane group covalently.</text>
</comment>
<comment type="pathway">
    <text evidence="1">Porphyrin-containing compound metabolism; protoporphyrin-IX biosynthesis; coproporphyrinogen-III from 5-aminolevulinate: step 2/4.</text>
</comment>
<comment type="subunit">
    <text evidence="1">Monomer.</text>
</comment>
<comment type="miscellaneous">
    <text evidence="1">The porphobilinogen subunits are added to the dipyrromethane group.</text>
</comment>
<comment type="similarity">
    <text evidence="1">Belongs to the HMBS family.</text>
</comment>
<proteinExistence type="inferred from homology"/>
<keyword id="KW-0627">Porphyrin biosynthesis</keyword>
<keyword id="KW-0808">Transferase</keyword>
<organism>
    <name type="scientific">Pseudomonas paraeruginosa (strain DSM 24068 / PA7)</name>
    <name type="common">Pseudomonas aeruginosa (strain PA7)</name>
    <dbReference type="NCBI Taxonomy" id="381754"/>
    <lineage>
        <taxon>Bacteria</taxon>
        <taxon>Pseudomonadati</taxon>
        <taxon>Pseudomonadota</taxon>
        <taxon>Gammaproteobacteria</taxon>
        <taxon>Pseudomonadales</taxon>
        <taxon>Pseudomonadaceae</taxon>
        <taxon>Pseudomonas</taxon>
        <taxon>Pseudomonas paraeruginosa</taxon>
    </lineage>
</organism>